<proteinExistence type="evidence at transcript level"/>
<organism>
    <name type="scientific">Xenopus laevis</name>
    <name type="common">African clawed frog</name>
    <dbReference type="NCBI Taxonomy" id="8355"/>
    <lineage>
        <taxon>Eukaryota</taxon>
        <taxon>Metazoa</taxon>
        <taxon>Chordata</taxon>
        <taxon>Craniata</taxon>
        <taxon>Vertebrata</taxon>
        <taxon>Euteleostomi</taxon>
        <taxon>Amphibia</taxon>
        <taxon>Batrachia</taxon>
        <taxon>Anura</taxon>
        <taxon>Pipoidea</taxon>
        <taxon>Pipidae</taxon>
        <taxon>Xenopodinae</taxon>
        <taxon>Xenopus</taxon>
        <taxon>Xenopus</taxon>
    </lineage>
</organism>
<protein>
    <recommendedName>
        <fullName>CTP synthase 2</fullName>
        <ecNumber>6.3.4.2</ecNumber>
    </recommendedName>
    <alternativeName>
        <fullName>CTP synthetase 2</fullName>
    </alternativeName>
    <alternativeName>
        <fullName>UTP--ammonia ligase 2</fullName>
    </alternativeName>
</protein>
<accession>Q6GME1</accession>
<evidence type="ECO:0000250" key="1"/>
<evidence type="ECO:0000305" key="2"/>
<gene>
    <name type="primary">ctps2</name>
</gene>
<keyword id="KW-0067">ATP-binding</keyword>
<keyword id="KW-0315">Glutamine amidotransferase</keyword>
<keyword id="KW-0436">Ligase</keyword>
<keyword id="KW-0547">Nucleotide-binding</keyword>
<keyword id="KW-0665">Pyrimidine biosynthesis</keyword>
<keyword id="KW-1185">Reference proteome</keyword>
<comment type="function">
    <text evidence="1">Catalyzes the ATP-dependent amination of UTP to CTP with either L-glutamine or ammonia as the source of nitrogen. Constitutes the rate-limiting enzyme in the synthesis of cytosine nucleotides (By similarity).</text>
</comment>
<comment type="catalytic activity">
    <reaction>
        <text>UTP + L-glutamine + ATP + H2O = CTP + L-glutamate + ADP + phosphate + 2 H(+)</text>
        <dbReference type="Rhea" id="RHEA:26426"/>
        <dbReference type="ChEBI" id="CHEBI:15377"/>
        <dbReference type="ChEBI" id="CHEBI:15378"/>
        <dbReference type="ChEBI" id="CHEBI:29985"/>
        <dbReference type="ChEBI" id="CHEBI:30616"/>
        <dbReference type="ChEBI" id="CHEBI:37563"/>
        <dbReference type="ChEBI" id="CHEBI:43474"/>
        <dbReference type="ChEBI" id="CHEBI:46398"/>
        <dbReference type="ChEBI" id="CHEBI:58359"/>
        <dbReference type="ChEBI" id="CHEBI:456216"/>
        <dbReference type="EC" id="6.3.4.2"/>
    </reaction>
</comment>
<comment type="pathway">
    <text>Pyrimidine metabolism; CTP biosynthesis via de novo pathway; CTP from UDP: step 2/2.</text>
</comment>
<comment type="similarity">
    <text evidence="2">Belongs to the CTP synthase family.</text>
</comment>
<name>PYRG2_XENLA</name>
<sequence>MKYILVTGGVISGVGKGIIASSIGTILKSCGLRVTAIKIDPYINIDAGTFSPYEHGEVFVLNDGGEVDLDLGNYERFLDINLYKDNNITTGKIYQQVINRERRGDYLGKTVQVVPHITDAIQEWVLNQAKVPVDRDQKEPQICVIELGGTIGDIEGMPFIEAFRQFQFKAKRENFCNIHVSLVPQPSATGEQKTKPTQNSVRALRGLGLSPDLIVCRSAKPIEMAVKQKISMFCHVEPEQVIFVHDVSSTYRVPILLQEQGIIKYFKQRLSIPIEDQPSTQLFKWKRMADRYERLLKTCSIALVGKYTKLSDCYTSVFKALEHSALAINHKLNLMYIDSADLEPSMKAQDPVKYHKAWEELCKAEGILVPGGFGLRGTEGKIQAITWARERKIPFLGICLGMQLAVVEFARNILKMTDANSTEFDPNTKNPAVIDMPEHHPGDMGGTMRLGSRKTVFKTSESVVKKLYDNQDFVEERHRHRYEVNPELVQQFEEKGLKFVGQDNEGQRMEIIELEGHPYFVGVQFHPEFCSRPMKPSPPYLGFMLAASGKLNTYVQNGCKLSPRNSYSEHSDESSSDS</sequence>
<reference key="1">
    <citation type="submission" date="2004-06" db="EMBL/GenBank/DDBJ databases">
        <authorList>
            <consortium name="NIH - Xenopus Gene Collection (XGC) project"/>
        </authorList>
    </citation>
    <scope>NUCLEOTIDE SEQUENCE [LARGE SCALE MRNA]</scope>
    <source>
        <tissue>Kidney</tissue>
    </source>
</reference>
<dbReference type="EC" id="6.3.4.2"/>
<dbReference type="EMBL" id="BC074125">
    <property type="protein sequence ID" value="AAH74125.1"/>
    <property type="molecule type" value="mRNA"/>
</dbReference>
<dbReference type="RefSeq" id="NP_001086048.1">
    <property type="nucleotide sequence ID" value="NM_001092579.1"/>
</dbReference>
<dbReference type="SMR" id="Q6GME1"/>
<dbReference type="GeneID" id="444477"/>
<dbReference type="KEGG" id="xla:444477"/>
<dbReference type="AGR" id="Xenbase:XB-GENE-991295"/>
<dbReference type="CTD" id="444477"/>
<dbReference type="Xenbase" id="XB-GENE-991295">
    <property type="gene designation" value="ctps2.L"/>
</dbReference>
<dbReference type="OrthoDB" id="1739076at2759"/>
<dbReference type="UniPathway" id="UPA00159">
    <property type="reaction ID" value="UER00277"/>
</dbReference>
<dbReference type="Proteomes" id="UP000186698">
    <property type="component" value="Chromosome 2L"/>
</dbReference>
<dbReference type="Bgee" id="444477">
    <property type="expression patterns" value="Expressed in muscle tissue and 19 other cell types or tissues"/>
</dbReference>
<dbReference type="GO" id="GO:0097268">
    <property type="term" value="C:cytoophidium"/>
    <property type="evidence" value="ECO:0000318"/>
    <property type="project" value="GO_Central"/>
</dbReference>
<dbReference type="GO" id="GO:0005737">
    <property type="term" value="C:cytoplasm"/>
    <property type="evidence" value="ECO:0000318"/>
    <property type="project" value="GO_Central"/>
</dbReference>
<dbReference type="GO" id="GO:0005524">
    <property type="term" value="F:ATP binding"/>
    <property type="evidence" value="ECO:0007669"/>
    <property type="project" value="UniProtKB-KW"/>
</dbReference>
<dbReference type="GO" id="GO:0003883">
    <property type="term" value="F:CTP synthase activity"/>
    <property type="evidence" value="ECO:0000318"/>
    <property type="project" value="GO_Central"/>
</dbReference>
<dbReference type="GO" id="GO:0042802">
    <property type="term" value="F:identical protein binding"/>
    <property type="evidence" value="ECO:0000318"/>
    <property type="project" value="GO_Central"/>
</dbReference>
<dbReference type="GO" id="GO:0044210">
    <property type="term" value="P:'de novo' CTP biosynthetic process"/>
    <property type="evidence" value="ECO:0007669"/>
    <property type="project" value="UniProtKB-UniPathway"/>
</dbReference>
<dbReference type="GO" id="GO:0006241">
    <property type="term" value="P:CTP biosynthetic process"/>
    <property type="evidence" value="ECO:0000318"/>
    <property type="project" value="GO_Central"/>
</dbReference>
<dbReference type="GO" id="GO:0019856">
    <property type="term" value="P:pyrimidine nucleobase biosynthetic process"/>
    <property type="evidence" value="ECO:0000318"/>
    <property type="project" value="GO_Central"/>
</dbReference>
<dbReference type="CDD" id="cd03113">
    <property type="entry name" value="CTPS_N"/>
    <property type="match status" value="1"/>
</dbReference>
<dbReference type="CDD" id="cd01746">
    <property type="entry name" value="GATase1_CTP_Synthase"/>
    <property type="match status" value="1"/>
</dbReference>
<dbReference type="FunFam" id="3.40.50.300:FF:000207">
    <property type="entry name" value="CTP synthase"/>
    <property type="match status" value="1"/>
</dbReference>
<dbReference type="FunFam" id="3.40.50.880:FF:000005">
    <property type="entry name" value="CTP synthase"/>
    <property type="match status" value="1"/>
</dbReference>
<dbReference type="Gene3D" id="3.40.50.880">
    <property type="match status" value="1"/>
</dbReference>
<dbReference type="Gene3D" id="3.40.50.300">
    <property type="entry name" value="P-loop containing nucleotide triphosphate hydrolases"/>
    <property type="match status" value="1"/>
</dbReference>
<dbReference type="HAMAP" id="MF_01227">
    <property type="entry name" value="PyrG"/>
    <property type="match status" value="1"/>
</dbReference>
<dbReference type="InterPro" id="IPR029062">
    <property type="entry name" value="Class_I_gatase-like"/>
</dbReference>
<dbReference type="InterPro" id="IPR004468">
    <property type="entry name" value="CTP_synthase"/>
</dbReference>
<dbReference type="InterPro" id="IPR017456">
    <property type="entry name" value="CTP_synthase_N"/>
</dbReference>
<dbReference type="InterPro" id="IPR017926">
    <property type="entry name" value="GATASE"/>
</dbReference>
<dbReference type="InterPro" id="IPR033828">
    <property type="entry name" value="GATase1_CTP_Synthase"/>
</dbReference>
<dbReference type="InterPro" id="IPR027417">
    <property type="entry name" value="P-loop_NTPase"/>
</dbReference>
<dbReference type="NCBIfam" id="NF003792">
    <property type="entry name" value="PRK05380.1"/>
    <property type="match status" value="1"/>
</dbReference>
<dbReference type="NCBIfam" id="TIGR00337">
    <property type="entry name" value="PyrG"/>
    <property type="match status" value="1"/>
</dbReference>
<dbReference type="PANTHER" id="PTHR11550">
    <property type="entry name" value="CTP SYNTHASE"/>
    <property type="match status" value="1"/>
</dbReference>
<dbReference type="PANTHER" id="PTHR11550:SF2">
    <property type="entry name" value="CTP SYNTHASE 2"/>
    <property type="match status" value="1"/>
</dbReference>
<dbReference type="Pfam" id="PF06418">
    <property type="entry name" value="CTP_synth_N"/>
    <property type="match status" value="1"/>
</dbReference>
<dbReference type="Pfam" id="PF00117">
    <property type="entry name" value="GATase"/>
    <property type="match status" value="1"/>
</dbReference>
<dbReference type="SUPFAM" id="SSF52317">
    <property type="entry name" value="Class I glutamine amidotransferase-like"/>
    <property type="match status" value="1"/>
</dbReference>
<dbReference type="SUPFAM" id="SSF52540">
    <property type="entry name" value="P-loop containing nucleoside triphosphate hydrolases"/>
    <property type="match status" value="1"/>
</dbReference>
<dbReference type="PROSITE" id="PS51273">
    <property type="entry name" value="GATASE_TYPE_1"/>
    <property type="match status" value="1"/>
</dbReference>
<feature type="chain" id="PRO_0000247037" description="CTP synthase 2">
    <location>
        <begin position="1"/>
        <end position="578"/>
    </location>
</feature>
<feature type="domain" description="Glutamine amidotransferase type-1">
    <location>
        <begin position="300"/>
        <end position="553"/>
    </location>
</feature>
<feature type="active site" description="For GATase activity" evidence="1">
    <location>
        <position position="399"/>
    </location>
</feature>
<feature type="active site" description="For GATase activity" evidence="1">
    <location>
        <position position="526"/>
    </location>
</feature>
<feature type="active site" description="For GATase activity" evidence="1">
    <location>
        <position position="528"/>
    </location>
</feature>